<accession>Q96T92</accession>
<accession>A1L432</accession>
<accession>J9Y024</accession>
<accession>Q8N8K7</accession>
<accession>Q96Q84</accession>
<feature type="chain" id="PRO_0000331576" description="Insulinoma-associated protein 2">
    <location>
        <begin position="1"/>
        <end position="566"/>
    </location>
</feature>
<feature type="zinc finger region" description="C2H2-type 1; atypical" evidence="2">
    <location>
        <begin position="263"/>
        <end position="283"/>
    </location>
</feature>
<feature type="zinc finger region" description="C2H2-type 2" evidence="2">
    <location>
        <begin position="291"/>
        <end position="313"/>
    </location>
</feature>
<feature type="zinc finger region" description="C2H2-type 3" evidence="2">
    <location>
        <begin position="426"/>
        <end position="448"/>
    </location>
</feature>
<feature type="zinc finger region" description="C2H2-type 4" evidence="2">
    <location>
        <begin position="470"/>
        <end position="492"/>
    </location>
</feature>
<feature type="zinc finger region" description="C2H2-type 5" evidence="2">
    <location>
        <begin position="525"/>
        <end position="548"/>
    </location>
</feature>
<feature type="region of interest" description="SNAG domain" evidence="1">
    <location>
        <begin position="1"/>
        <end position="20"/>
    </location>
</feature>
<feature type="region of interest" description="Disordered" evidence="3">
    <location>
        <begin position="32"/>
        <end position="117"/>
    </location>
</feature>
<feature type="region of interest" description="Disordered" evidence="3">
    <location>
        <begin position="310"/>
        <end position="418"/>
    </location>
</feature>
<feature type="compositionally biased region" description="Pro residues" evidence="3">
    <location>
        <begin position="103"/>
        <end position="113"/>
    </location>
</feature>
<feature type="compositionally biased region" description="Low complexity" evidence="3">
    <location>
        <begin position="318"/>
        <end position="348"/>
    </location>
</feature>
<feature type="compositionally biased region" description="Basic and acidic residues" evidence="3">
    <location>
        <begin position="352"/>
        <end position="369"/>
    </location>
</feature>
<feature type="sequence variant" id="VAR_070885" description="In dbSNP:rs1958260." evidence="4 5 7 8 9">
    <original>D</original>
    <variation>G</variation>
    <location>
        <position position="206"/>
    </location>
</feature>
<feature type="sequence conflict" description="In Ref. 3; BAB69042." evidence="10" ref="3">
    <original>E</original>
    <variation>G</variation>
    <location>
        <position position="198"/>
    </location>
</feature>
<feature type="sequence conflict" description="In Ref. 4; BAC04830." evidence="10" ref="4">
    <original>G</original>
    <variation>E</variation>
    <location>
        <position position="330"/>
    </location>
</feature>
<feature type="sequence conflict" description="In Ref. 1; AAK49393." evidence="10" ref="1">
    <original>L</original>
    <variation>V</variation>
    <location>
        <position position="390"/>
    </location>
</feature>
<protein>
    <recommendedName>
        <fullName>Insulinoma-associated protein 2</fullName>
    </recommendedName>
    <alternativeName>
        <fullName>Zinc finger protein IA-6</fullName>
    </alternativeName>
</protein>
<comment type="function">
    <text evidence="1">May function as a growth suppressor or tumor suppressor in liver cells and in certain neurons.</text>
</comment>
<comment type="subcellular location">
    <subcellularLocation>
        <location evidence="1">Cytoplasm</location>
    </subcellularLocation>
    <subcellularLocation>
        <location evidence="1">Nucleus</location>
    </subcellularLocation>
</comment>
<comment type="tissue specificity">
    <text evidence="6">Expressed in heart, liver, skeletal muscle, kidney and pancreas, and, to a lesser extent, in brain, lung and spleen. In the pancreas, expressed in islet cells, including insulin- and glucagon-producing alpha- and beta-cells, but not in acinar cells (at protein level). Detected in adrenal glands, particularly in the deeper layer of the cortex (at protein level).</text>
</comment>
<comment type="developmental stage">
    <text evidence="6">Expressed in the islet-like cells of the developing pancreas and epithelial cells of the duodenum from gestational weeks 8 to 20 (at protein level).</text>
</comment>
<comment type="sequence caution" evidence="10">
    <conflict type="frameshift">
        <sequence resource="EMBL-CDS" id="AAK49393"/>
    </conflict>
</comment>
<proteinExistence type="evidence at protein level"/>
<keyword id="KW-0963">Cytoplasm</keyword>
<keyword id="KW-0238">DNA-binding</keyword>
<keyword id="KW-0479">Metal-binding</keyword>
<keyword id="KW-0539">Nucleus</keyword>
<keyword id="KW-1267">Proteomics identification</keyword>
<keyword id="KW-1185">Reference proteome</keyword>
<keyword id="KW-0677">Repeat</keyword>
<keyword id="KW-0804">Transcription</keyword>
<keyword id="KW-0805">Transcription regulation</keyword>
<keyword id="KW-0862">Zinc</keyword>
<keyword id="KW-0863">Zinc-finger</keyword>
<gene>
    <name type="primary">INSM2</name>
    <name type="synonym">IA6</name>
    <name type="ORF">Nbla106</name>
</gene>
<organism>
    <name type="scientific">Homo sapiens</name>
    <name type="common">Human</name>
    <dbReference type="NCBI Taxonomy" id="9606"/>
    <lineage>
        <taxon>Eukaryota</taxon>
        <taxon>Metazoa</taxon>
        <taxon>Chordata</taxon>
        <taxon>Craniata</taxon>
        <taxon>Vertebrata</taxon>
        <taxon>Euteleostomi</taxon>
        <taxon>Mammalia</taxon>
        <taxon>Eutheria</taxon>
        <taxon>Euarchontoglires</taxon>
        <taxon>Primates</taxon>
        <taxon>Haplorrhini</taxon>
        <taxon>Catarrhini</taxon>
        <taxon>Hominidae</taxon>
        <taxon>Homo</taxon>
    </lineage>
</organism>
<sequence length="566" mass="59491">MPRGFLVKRTKRTGGLYRVRLAERVFPLLGPQGAPPFLEEAPSASLPGAERATPPTREEPGKGLTAEAAREQSGSPCRAAGVSPGTGGREGAEWRAGGREGPGPSPSPSPSPAKPAGAELRRAFLERCLSSPVSAESFPGGAAAVAAFSCSVAPAAAPTPGEQFLLPLRAPFPEPALQPDPAPLSAALQSLKRAAGGERRGKAPTDCASGPAAAGIKKPKAMRKLSFADEVTTSPVLGLKIKEEEPGAPSRGLGGSRTPLGEFICQLCKEQYADPFALAQHRCSRIVRVEYRCPECDKVFSCPANLASHRRWHKPRPAAANAATVSSADGKPPSSSSSSSRDSGAIASFLAEGKENSRIERTADQHPQARDSSGADQHPDSAPRQGLQVLTHPEPPLPQGPYTEGVLGRRVPVPGSTSGGRGSEIFVCPYCHKKFRRQAYLRKHLSTHEAGSARALAPGFGSERGAPLAFACPLCGAHFPTADIREKHRLWHAVREELLLPALAGAPPETSGPSGPSDGSAQQIFSCKHCPSTFFSSPGLTRHINKCHPSESRQVLLLQMPLRPGC</sequence>
<name>INSM2_HUMAN</name>
<reference key="1">
    <citation type="submission" date="2000-04" db="EMBL/GenBank/DDBJ databases">
        <title>A novel insulinoma-associated gene IA-6 with C2H2-type zinc finger motifs expressed in neuroendocrine tissues.</title>
        <authorList>
            <person name="Cai T."/>
            <person name="Notkins A.L."/>
        </authorList>
    </citation>
    <scope>NUCLEOTIDE SEQUENCE [MRNA]</scope>
    <scope>VARIANT GLY-206</scope>
</reference>
<reference key="2">
    <citation type="submission" date="2012-07" db="EMBL/GenBank/DDBJ databases">
        <title>Insm2 is expressed in the developing mammalian retina.</title>
        <authorList>
            <person name="Halford S."/>
            <person name="Broadgate S.L."/>
        </authorList>
    </citation>
    <scope>NUCLEOTIDE SEQUENCE [MRNA]</scope>
    <scope>VARIANT GLY-206</scope>
</reference>
<reference key="3">
    <citation type="journal article" date="2003" name="Cancer Lett.">
        <title>Neuroblastoma oligo-capping cDNA project: toward the understanding of the genesis and biology of neuroblastoma.</title>
        <authorList>
            <person name="Ohira M."/>
            <person name="Morohashi A."/>
            <person name="Nakamura Y."/>
            <person name="Isogai E."/>
            <person name="Furuya K."/>
            <person name="Hamano S."/>
            <person name="Machida T."/>
            <person name="Aoyama M."/>
            <person name="Fukumura M."/>
            <person name="Miyazaki K."/>
            <person name="Suzuki Y."/>
            <person name="Sugano S."/>
            <person name="Hirato J."/>
            <person name="Nakagawara A."/>
        </authorList>
    </citation>
    <scope>NUCLEOTIDE SEQUENCE [LARGE SCALE MRNA]</scope>
    <scope>VARIANT GLY-206</scope>
    <source>
        <tissue>Neuroblastoma</tissue>
    </source>
</reference>
<reference key="4">
    <citation type="journal article" date="2004" name="Nat. Genet.">
        <title>Complete sequencing and characterization of 21,243 full-length human cDNAs.</title>
        <authorList>
            <person name="Ota T."/>
            <person name="Suzuki Y."/>
            <person name="Nishikawa T."/>
            <person name="Otsuki T."/>
            <person name="Sugiyama T."/>
            <person name="Irie R."/>
            <person name="Wakamatsu A."/>
            <person name="Hayashi K."/>
            <person name="Sato H."/>
            <person name="Nagai K."/>
            <person name="Kimura K."/>
            <person name="Makita H."/>
            <person name="Sekine M."/>
            <person name="Obayashi M."/>
            <person name="Nishi T."/>
            <person name="Shibahara T."/>
            <person name="Tanaka T."/>
            <person name="Ishii S."/>
            <person name="Yamamoto J."/>
            <person name="Saito K."/>
            <person name="Kawai Y."/>
            <person name="Isono Y."/>
            <person name="Nakamura Y."/>
            <person name="Nagahari K."/>
            <person name="Murakami K."/>
            <person name="Yasuda T."/>
            <person name="Iwayanagi T."/>
            <person name="Wagatsuma M."/>
            <person name="Shiratori A."/>
            <person name="Sudo H."/>
            <person name="Hosoiri T."/>
            <person name="Kaku Y."/>
            <person name="Kodaira H."/>
            <person name="Kondo H."/>
            <person name="Sugawara M."/>
            <person name="Takahashi M."/>
            <person name="Kanda K."/>
            <person name="Yokoi T."/>
            <person name="Furuya T."/>
            <person name="Kikkawa E."/>
            <person name="Omura Y."/>
            <person name="Abe K."/>
            <person name="Kamihara K."/>
            <person name="Katsuta N."/>
            <person name="Sato K."/>
            <person name="Tanikawa M."/>
            <person name="Yamazaki M."/>
            <person name="Ninomiya K."/>
            <person name="Ishibashi T."/>
            <person name="Yamashita H."/>
            <person name="Murakawa K."/>
            <person name="Fujimori K."/>
            <person name="Tanai H."/>
            <person name="Kimata M."/>
            <person name="Watanabe M."/>
            <person name="Hiraoka S."/>
            <person name="Chiba Y."/>
            <person name="Ishida S."/>
            <person name="Ono Y."/>
            <person name="Takiguchi S."/>
            <person name="Watanabe S."/>
            <person name="Yosida M."/>
            <person name="Hotuta T."/>
            <person name="Kusano J."/>
            <person name="Kanehori K."/>
            <person name="Takahashi-Fujii A."/>
            <person name="Hara H."/>
            <person name="Tanase T.-O."/>
            <person name="Nomura Y."/>
            <person name="Togiya S."/>
            <person name="Komai F."/>
            <person name="Hara R."/>
            <person name="Takeuchi K."/>
            <person name="Arita M."/>
            <person name="Imose N."/>
            <person name="Musashino K."/>
            <person name="Yuuki H."/>
            <person name="Oshima A."/>
            <person name="Sasaki N."/>
            <person name="Aotsuka S."/>
            <person name="Yoshikawa Y."/>
            <person name="Matsunawa H."/>
            <person name="Ichihara T."/>
            <person name="Shiohata N."/>
            <person name="Sano S."/>
            <person name="Moriya S."/>
            <person name="Momiyama H."/>
            <person name="Satoh N."/>
            <person name="Takami S."/>
            <person name="Terashima Y."/>
            <person name="Suzuki O."/>
            <person name="Nakagawa S."/>
            <person name="Senoh A."/>
            <person name="Mizoguchi H."/>
            <person name="Goto Y."/>
            <person name="Shimizu F."/>
            <person name="Wakebe H."/>
            <person name="Hishigaki H."/>
            <person name="Watanabe T."/>
            <person name="Sugiyama A."/>
            <person name="Takemoto M."/>
            <person name="Kawakami B."/>
            <person name="Yamazaki M."/>
            <person name="Watanabe K."/>
            <person name="Kumagai A."/>
            <person name="Itakura S."/>
            <person name="Fukuzumi Y."/>
            <person name="Fujimori Y."/>
            <person name="Komiyama M."/>
            <person name="Tashiro H."/>
            <person name="Tanigami A."/>
            <person name="Fujiwara T."/>
            <person name="Ono T."/>
            <person name="Yamada K."/>
            <person name="Fujii Y."/>
            <person name="Ozaki K."/>
            <person name="Hirao M."/>
            <person name="Ohmori Y."/>
            <person name="Kawabata A."/>
            <person name="Hikiji T."/>
            <person name="Kobatake N."/>
            <person name="Inagaki H."/>
            <person name="Ikema Y."/>
            <person name="Okamoto S."/>
            <person name="Okitani R."/>
            <person name="Kawakami T."/>
            <person name="Noguchi S."/>
            <person name="Itoh T."/>
            <person name="Shigeta K."/>
            <person name="Senba T."/>
            <person name="Matsumura K."/>
            <person name="Nakajima Y."/>
            <person name="Mizuno T."/>
            <person name="Morinaga M."/>
            <person name="Sasaki M."/>
            <person name="Togashi T."/>
            <person name="Oyama M."/>
            <person name="Hata H."/>
            <person name="Watanabe M."/>
            <person name="Komatsu T."/>
            <person name="Mizushima-Sugano J."/>
            <person name="Satoh T."/>
            <person name="Shirai Y."/>
            <person name="Takahashi Y."/>
            <person name="Nakagawa K."/>
            <person name="Okumura K."/>
            <person name="Nagase T."/>
            <person name="Nomura N."/>
            <person name="Kikuchi H."/>
            <person name="Masuho Y."/>
            <person name="Yamashita R."/>
            <person name="Nakai K."/>
            <person name="Yada T."/>
            <person name="Nakamura Y."/>
            <person name="Ohara O."/>
            <person name="Isogai T."/>
            <person name="Sugano S."/>
        </authorList>
    </citation>
    <scope>NUCLEOTIDE SEQUENCE [LARGE SCALE MRNA]</scope>
    <source>
        <tissue>Brain</tissue>
    </source>
</reference>
<reference key="5">
    <citation type="journal article" date="2003" name="Nature">
        <title>The DNA sequence and analysis of human chromosome 14.</title>
        <authorList>
            <person name="Heilig R."/>
            <person name="Eckenberg R."/>
            <person name="Petit J.-L."/>
            <person name="Fonknechten N."/>
            <person name="Da Silva C."/>
            <person name="Cattolico L."/>
            <person name="Levy M."/>
            <person name="Barbe V."/>
            <person name="De Berardinis V."/>
            <person name="Ureta-Vidal A."/>
            <person name="Pelletier E."/>
            <person name="Vico V."/>
            <person name="Anthouard V."/>
            <person name="Rowen L."/>
            <person name="Madan A."/>
            <person name="Qin S."/>
            <person name="Sun H."/>
            <person name="Du H."/>
            <person name="Pepin K."/>
            <person name="Artiguenave F."/>
            <person name="Robert C."/>
            <person name="Cruaud C."/>
            <person name="Bruels T."/>
            <person name="Jaillon O."/>
            <person name="Friedlander L."/>
            <person name="Samson G."/>
            <person name="Brottier P."/>
            <person name="Cure S."/>
            <person name="Segurens B."/>
            <person name="Aniere F."/>
            <person name="Samain S."/>
            <person name="Crespeau H."/>
            <person name="Abbasi N."/>
            <person name="Aiach N."/>
            <person name="Boscus D."/>
            <person name="Dickhoff R."/>
            <person name="Dors M."/>
            <person name="Dubois I."/>
            <person name="Friedman C."/>
            <person name="Gouyvenoux M."/>
            <person name="James R."/>
            <person name="Madan A."/>
            <person name="Mairey-Estrada B."/>
            <person name="Mangenot S."/>
            <person name="Martins N."/>
            <person name="Menard M."/>
            <person name="Oztas S."/>
            <person name="Ratcliffe A."/>
            <person name="Shaffer T."/>
            <person name="Trask B."/>
            <person name="Vacherie B."/>
            <person name="Bellemere C."/>
            <person name="Belser C."/>
            <person name="Besnard-Gonnet M."/>
            <person name="Bartol-Mavel D."/>
            <person name="Boutard M."/>
            <person name="Briez-Silla S."/>
            <person name="Combette S."/>
            <person name="Dufosse-Laurent V."/>
            <person name="Ferron C."/>
            <person name="Lechaplais C."/>
            <person name="Louesse C."/>
            <person name="Muselet D."/>
            <person name="Magdelenat G."/>
            <person name="Pateau E."/>
            <person name="Petit E."/>
            <person name="Sirvain-Trukniewicz P."/>
            <person name="Trybou A."/>
            <person name="Vega-Czarny N."/>
            <person name="Bataille E."/>
            <person name="Bluet E."/>
            <person name="Bordelais I."/>
            <person name="Dubois M."/>
            <person name="Dumont C."/>
            <person name="Guerin T."/>
            <person name="Haffray S."/>
            <person name="Hammadi R."/>
            <person name="Muanga J."/>
            <person name="Pellouin V."/>
            <person name="Robert D."/>
            <person name="Wunderle E."/>
            <person name="Gauguet G."/>
            <person name="Roy A."/>
            <person name="Sainte-Marthe L."/>
            <person name="Verdier J."/>
            <person name="Verdier-Discala C."/>
            <person name="Hillier L.W."/>
            <person name="Fulton L."/>
            <person name="McPherson J."/>
            <person name="Matsuda F."/>
            <person name="Wilson R."/>
            <person name="Scarpelli C."/>
            <person name="Gyapay G."/>
            <person name="Wincker P."/>
            <person name="Saurin W."/>
            <person name="Quetier F."/>
            <person name="Waterston R."/>
            <person name="Hood L."/>
            <person name="Weissenbach J."/>
        </authorList>
    </citation>
    <scope>NUCLEOTIDE SEQUENCE [LARGE SCALE GENOMIC DNA]</scope>
</reference>
<reference key="6">
    <citation type="submission" date="2005-09" db="EMBL/GenBank/DDBJ databases">
        <authorList>
            <person name="Mural R.J."/>
            <person name="Istrail S."/>
            <person name="Sutton G.G."/>
            <person name="Florea L."/>
            <person name="Halpern A.L."/>
            <person name="Mobarry C.M."/>
            <person name="Lippert R."/>
            <person name="Walenz B."/>
            <person name="Shatkay H."/>
            <person name="Dew I."/>
            <person name="Miller J.R."/>
            <person name="Flanigan M.J."/>
            <person name="Edwards N.J."/>
            <person name="Bolanos R."/>
            <person name="Fasulo D."/>
            <person name="Halldorsson B.V."/>
            <person name="Hannenhalli S."/>
            <person name="Turner R."/>
            <person name="Yooseph S."/>
            <person name="Lu F."/>
            <person name="Nusskern D.R."/>
            <person name="Shue B.C."/>
            <person name="Zheng X.H."/>
            <person name="Zhong F."/>
            <person name="Delcher A.L."/>
            <person name="Huson D.H."/>
            <person name="Kravitz S.A."/>
            <person name="Mouchard L."/>
            <person name="Reinert K."/>
            <person name="Remington K.A."/>
            <person name="Clark A.G."/>
            <person name="Waterman M.S."/>
            <person name="Eichler E.E."/>
            <person name="Adams M.D."/>
            <person name="Hunkapiller M.W."/>
            <person name="Myers E.W."/>
            <person name="Venter J.C."/>
        </authorList>
    </citation>
    <scope>NUCLEOTIDE SEQUENCE [LARGE SCALE GENOMIC DNA]</scope>
    <scope>VARIANT GLY-206</scope>
</reference>
<reference key="7">
    <citation type="journal article" date="2004" name="Genome Res.">
        <title>The status, quality, and expansion of the NIH full-length cDNA project: the Mammalian Gene Collection (MGC).</title>
        <authorList>
            <consortium name="The MGC Project Team"/>
        </authorList>
    </citation>
    <scope>NUCLEOTIDE SEQUENCE [LARGE SCALE MRNA]</scope>
    <scope>VARIANT GLY-206</scope>
    <source>
        <tissue>Brain</tissue>
    </source>
</reference>
<reference key="8">
    <citation type="journal article" date="2011" name="Endocrinology">
        <title>Expression of insulinoma-associated 2 (INSM2) in pancreatic islet cells is regulated by the transcription factors Ngn3 and NeuroD1.</title>
        <authorList>
            <person name="Cai T."/>
            <person name="Chen X."/>
            <person name="Wang R."/>
            <person name="Xu H."/>
            <person name="You Y."/>
            <person name="Zhang T."/>
            <person name="Lan M.S."/>
            <person name="Notkins A.L."/>
        </authorList>
    </citation>
    <scope>DEVELOPMENTAL STAGE</scope>
    <scope>TISSUE SPECIFICITY</scope>
</reference>
<evidence type="ECO:0000250" key="1"/>
<evidence type="ECO:0000255" key="2">
    <source>
        <dbReference type="PROSITE-ProRule" id="PRU00042"/>
    </source>
</evidence>
<evidence type="ECO:0000256" key="3">
    <source>
        <dbReference type="SAM" id="MobiDB-lite"/>
    </source>
</evidence>
<evidence type="ECO:0000269" key="4">
    <source>
    </source>
</evidence>
<evidence type="ECO:0000269" key="5">
    <source>
    </source>
</evidence>
<evidence type="ECO:0000269" key="6">
    <source>
    </source>
</evidence>
<evidence type="ECO:0000269" key="7">
    <source ref="1"/>
</evidence>
<evidence type="ECO:0000269" key="8">
    <source ref="2"/>
</evidence>
<evidence type="ECO:0000269" key="9">
    <source ref="6"/>
</evidence>
<evidence type="ECO:0000305" key="10"/>
<dbReference type="EMBL" id="AF260323">
    <property type="protein sequence ID" value="AAK49393.1"/>
    <property type="status" value="ALT_FRAME"/>
    <property type="molecule type" value="mRNA"/>
</dbReference>
<dbReference type="EMBL" id="JX403968">
    <property type="protein sequence ID" value="AFS33107.1"/>
    <property type="molecule type" value="mRNA"/>
</dbReference>
<dbReference type="EMBL" id="AB037912">
    <property type="protein sequence ID" value="BAB69042.1"/>
    <property type="molecule type" value="mRNA"/>
</dbReference>
<dbReference type="EMBL" id="AK096639">
    <property type="protein sequence ID" value="BAC04830.1"/>
    <property type="molecule type" value="mRNA"/>
</dbReference>
<dbReference type="EMBL" id="AL160231">
    <property type="status" value="NOT_ANNOTATED_CDS"/>
    <property type="molecule type" value="Genomic_DNA"/>
</dbReference>
<dbReference type="EMBL" id="CH471078">
    <property type="protein sequence ID" value="EAW65872.1"/>
    <property type="molecule type" value="Genomic_DNA"/>
</dbReference>
<dbReference type="EMBL" id="BC130377">
    <property type="protein sequence ID" value="AAI30378.1"/>
    <property type="molecule type" value="mRNA"/>
</dbReference>
<dbReference type="EMBL" id="BC130379">
    <property type="protein sequence ID" value="AAI30380.1"/>
    <property type="molecule type" value="mRNA"/>
</dbReference>
<dbReference type="CCDS" id="CCDS9657.1"/>
<dbReference type="RefSeq" id="NP_115983.3">
    <property type="nucleotide sequence ID" value="NM_032594.3"/>
</dbReference>
<dbReference type="BioGRID" id="124201">
    <property type="interactions" value="4"/>
</dbReference>
<dbReference type="FunCoup" id="Q96T92">
    <property type="interactions" value="668"/>
</dbReference>
<dbReference type="IntAct" id="Q96T92">
    <property type="interactions" value="1"/>
</dbReference>
<dbReference type="STRING" id="9606.ENSP00000306523"/>
<dbReference type="GlyGen" id="Q96T92">
    <property type="glycosylation" value="1 site"/>
</dbReference>
<dbReference type="iPTMnet" id="Q96T92"/>
<dbReference type="PhosphoSitePlus" id="Q96T92"/>
<dbReference type="BioMuta" id="INSM2"/>
<dbReference type="DMDM" id="296439326"/>
<dbReference type="MassIVE" id="Q96T92"/>
<dbReference type="PaxDb" id="9606-ENSP00000306523"/>
<dbReference type="PeptideAtlas" id="Q96T92"/>
<dbReference type="ProteomicsDB" id="78217"/>
<dbReference type="Antibodypedia" id="23212">
    <property type="antibodies" value="81 antibodies from 22 providers"/>
</dbReference>
<dbReference type="DNASU" id="84684"/>
<dbReference type="Ensembl" id="ENST00000307169.4">
    <property type="protein sequence ID" value="ENSP00000306523.3"/>
    <property type="gene ID" value="ENSG00000168348.4"/>
</dbReference>
<dbReference type="GeneID" id="84684"/>
<dbReference type="KEGG" id="hsa:84684"/>
<dbReference type="MANE-Select" id="ENST00000307169.4">
    <property type="protein sequence ID" value="ENSP00000306523.3"/>
    <property type="RefSeq nucleotide sequence ID" value="NM_032594.4"/>
    <property type="RefSeq protein sequence ID" value="NP_115983.3"/>
</dbReference>
<dbReference type="UCSC" id="uc001wth.1">
    <property type="organism name" value="human"/>
</dbReference>
<dbReference type="AGR" id="HGNC:17539"/>
<dbReference type="CTD" id="84684"/>
<dbReference type="DisGeNET" id="84684"/>
<dbReference type="GeneCards" id="INSM2"/>
<dbReference type="HGNC" id="HGNC:17539">
    <property type="gene designation" value="INSM2"/>
</dbReference>
<dbReference type="HPA" id="ENSG00000168348">
    <property type="expression patterns" value="Tissue enhanced (brain, retina)"/>
</dbReference>
<dbReference type="MIM" id="614027">
    <property type="type" value="gene"/>
</dbReference>
<dbReference type="neXtProt" id="NX_Q96T92"/>
<dbReference type="OpenTargets" id="ENSG00000168348"/>
<dbReference type="PharmGKB" id="PA134899231"/>
<dbReference type="VEuPathDB" id="HostDB:ENSG00000168348"/>
<dbReference type="eggNOG" id="KOG3993">
    <property type="taxonomic scope" value="Eukaryota"/>
</dbReference>
<dbReference type="GeneTree" id="ENSGT00940000162391"/>
<dbReference type="HOGENOM" id="CLU_033476_1_0_1"/>
<dbReference type="InParanoid" id="Q96T92"/>
<dbReference type="OMA" id="CPATFFS"/>
<dbReference type="OrthoDB" id="8953942at2759"/>
<dbReference type="PAN-GO" id="Q96T92">
    <property type="GO annotations" value="7 GO annotations based on evolutionary models"/>
</dbReference>
<dbReference type="PhylomeDB" id="Q96T92"/>
<dbReference type="TreeFam" id="TF320538"/>
<dbReference type="PathwayCommons" id="Q96T92"/>
<dbReference type="SignaLink" id="Q96T92"/>
<dbReference type="BioGRID-ORCS" id="84684">
    <property type="hits" value="18 hits in 1166 CRISPR screens"/>
</dbReference>
<dbReference type="GenomeRNAi" id="84684"/>
<dbReference type="Pharos" id="Q96T92">
    <property type="development level" value="Tbio"/>
</dbReference>
<dbReference type="PRO" id="PR:Q96T92"/>
<dbReference type="Proteomes" id="UP000005640">
    <property type="component" value="Chromosome 14"/>
</dbReference>
<dbReference type="RNAct" id="Q96T92">
    <property type="molecule type" value="protein"/>
</dbReference>
<dbReference type="Bgee" id="ENSG00000168348">
    <property type="expression patterns" value="Expressed in male germ line stem cell (sensu Vertebrata) in testis and 55 other cell types or tissues"/>
</dbReference>
<dbReference type="GO" id="GO:0005737">
    <property type="term" value="C:cytoplasm"/>
    <property type="evidence" value="ECO:0007669"/>
    <property type="project" value="UniProtKB-SubCell"/>
</dbReference>
<dbReference type="GO" id="GO:0005634">
    <property type="term" value="C:nucleus"/>
    <property type="evidence" value="ECO:0000318"/>
    <property type="project" value="GO_Central"/>
</dbReference>
<dbReference type="GO" id="GO:0017053">
    <property type="term" value="C:transcription repressor complex"/>
    <property type="evidence" value="ECO:0000318"/>
    <property type="project" value="GO_Central"/>
</dbReference>
<dbReference type="GO" id="GO:0001227">
    <property type="term" value="F:DNA-binding transcription repressor activity, RNA polymerase II-specific"/>
    <property type="evidence" value="ECO:0000318"/>
    <property type="project" value="GO_Central"/>
</dbReference>
<dbReference type="GO" id="GO:0000978">
    <property type="term" value="F:RNA polymerase II cis-regulatory region sequence-specific DNA binding"/>
    <property type="evidence" value="ECO:0000318"/>
    <property type="project" value="GO_Central"/>
</dbReference>
<dbReference type="GO" id="GO:0008270">
    <property type="term" value="F:zinc ion binding"/>
    <property type="evidence" value="ECO:0007669"/>
    <property type="project" value="UniProtKB-KW"/>
</dbReference>
<dbReference type="GO" id="GO:0000122">
    <property type="term" value="P:negative regulation of transcription by RNA polymerase II"/>
    <property type="evidence" value="ECO:0000318"/>
    <property type="project" value="GO_Central"/>
</dbReference>
<dbReference type="GO" id="GO:0030182">
    <property type="term" value="P:neuron differentiation"/>
    <property type="evidence" value="ECO:0000318"/>
    <property type="project" value="GO_Central"/>
</dbReference>
<dbReference type="GO" id="GO:0010564">
    <property type="term" value="P:regulation of cell cycle process"/>
    <property type="evidence" value="ECO:0000318"/>
    <property type="project" value="GO_Central"/>
</dbReference>
<dbReference type="FunFam" id="3.30.160.60:FF:000488">
    <property type="entry name" value="Insulinoma-associated protein 2"/>
    <property type="match status" value="1"/>
</dbReference>
<dbReference type="FunFam" id="3.30.160.60:FF:001411">
    <property type="entry name" value="insulinoma-associated protein 2"/>
    <property type="match status" value="1"/>
</dbReference>
<dbReference type="Gene3D" id="3.30.160.60">
    <property type="entry name" value="Classic Zinc Finger"/>
    <property type="match status" value="3"/>
</dbReference>
<dbReference type="InterPro" id="IPR042972">
    <property type="entry name" value="INSM1/2"/>
</dbReference>
<dbReference type="InterPro" id="IPR036236">
    <property type="entry name" value="Znf_C2H2_sf"/>
</dbReference>
<dbReference type="InterPro" id="IPR013087">
    <property type="entry name" value="Znf_C2H2_type"/>
</dbReference>
<dbReference type="PANTHER" id="PTHR15065">
    <property type="entry name" value="INSULINOMA-ASSOCIATED 1"/>
    <property type="match status" value="1"/>
</dbReference>
<dbReference type="PANTHER" id="PTHR15065:SF6">
    <property type="entry name" value="INSULINOMA-ASSOCIATED PROTEIN 2"/>
    <property type="match status" value="1"/>
</dbReference>
<dbReference type="Pfam" id="PF00096">
    <property type="entry name" value="zf-C2H2"/>
    <property type="match status" value="2"/>
</dbReference>
<dbReference type="SMART" id="SM00355">
    <property type="entry name" value="ZnF_C2H2"/>
    <property type="match status" value="5"/>
</dbReference>
<dbReference type="SUPFAM" id="SSF57667">
    <property type="entry name" value="beta-beta-alpha zinc fingers"/>
    <property type="match status" value="2"/>
</dbReference>
<dbReference type="PROSITE" id="PS00028">
    <property type="entry name" value="ZINC_FINGER_C2H2_1"/>
    <property type="match status" value="4"/>
</dbReference>
<dbReference type="PROSITE" id="PS50157">
    <property type="entry name" value="ZINC_FINGER_C2H2_2"/>
    <property type="match status" value="3"/>
</dbReference>